<accession>C0H3Z3</accession>
<sequence>METKKEEYETKGYDTSIVYEFNEYPDARSGRCDNCDYTLFKSSVKGGKFLRECRRCGMKKNI</sequence>
<reference key="1">
    <citation type="journal article" date="1997" name="Nature">
        <title>The complete genome sequence of the Gram-positive bacterium Bacillus subtilis.</title>
        <authorList>
            <person name="Kunst F."/>
            <person name="Ogasawara N."/>
            <person name="Moszer I."/>
            <person name="Albertini A.M."/>
            <person name="Alloni G."/>
            <person name="Azevedo V."/>
            <person name="Bertero M.G."/>
            <person name="Bessieres P."/>
            <person name="Bolotin A."/>
            <person name="Borchert S."/>
            <person name="Borriss R."/>
            <person name="Boursier L."/>
            <person name="Brans A."/>
            <person name="Braun M."/>
            <person name="Brignell S.C."/>
            <person name="Bron S."/>
            <person name="Brouillet S."/>
            <person name="Bruschi C.V."/>
            <person name="Caldwell B."/>
            <person name="Capuano V."/>
            <person name="Carter N.M."/>
            <person name="Choi S.-K."/>
            <person name="Codani J.-J."/>
            <person name="Connerton I.F."/>
            <person name="Cummings N.J."/>
            <person name="Daniel R.A."/>
            <person name="Denizot F."/>
            <person name="Devine K.M."/>
            <person name="Duesterhoeft A."/>
            <person name="Ehrlich S.D."/>
            <person name="Emmerson P.T."/>
            <person name="Entian K.-D."/>
            <person name="Errington J."/>
            <person name="Fabret C."/>
            <person name="Ferrari E."/>
            <person name="Foulger D."/>
            <person name="Fritz C."/>
            <person name="Fujita M."/>
            <person name="Fujita Y."/>
            <person name="Fuma S."/>
            <person name="Galizzi A."/>
            <person name="Galleron N."/>
            <person name="Ghim S.-Y."/>
            <person name="Glaser P."/>
            <person name="Goffeau A."/>
            <person name="Golightly E.J."/>
            <person name="Grandi G."/>
            <person name="Guiseppi G."/>
            <person name="Guy B.J."/>
            <person name="Haga K."/>
            <person name="Haiech J."/>
            <person name="Harwood C.R."/>
            <person name="Henaut A."/>
            <person name="Hilbert H."/>
            <person name="Holsappel S."/>
            <person name="Hosono S."/>
            <person name="Hullo M.-F."/>
            <person name="Itaya M."/>
            <person name="Jones L.-M."/>
            <person name="Joris B."/>
            <person name="Karamata D."/>
            <person name="Kasahara Y."/>
            <person name="Klaerr-Blanchard M."/>
            <person name="Klein C."/>
            <person name="Kobayashi Y."/>
            <person name="Koetter P."/>
            <person name="Koningstein G."/>
            <person name="Krogh S."/>
            <person name="Kumano M."/>
            <person name="Kurita K."/>
            <person name="Lapidus A."/>
            <person name="Lardinois S."/>
            <person name="Lauber J."/>
            <person name="Lazarevic V."/>
            <person name="Lee S.-M."/>
            <person name="Levine A."/>
            <person name="Liu H."/>
            <person name="Masuda S."/>
            <person name="Mauel C."/>
            <person name="Medigue C."/>
            <person name="Medina N."/>
            <person name="Mellado R.P."/>
            <person name="Mizuno M."/>
            <person name="Moestl D."/>
            <person name="Nakai S."/>
            <person name="Noback M."/>
            <person name="Noone D."/>
            <person name="O'Reilly M."/>
            <person name="Ogawa K."/>
            <person name="Ogiwara A."/>
            <person name="Oudega B."/>
            <person name="Park S.-H."/>
            <person name="Parro V."/>
            <person name="Pohl T.M."/>
            <person name="Portetelle D."/>
            <person name="Porwollik S."/>
            <person name="Prescott A.M."/>
            <person name="Presecan E."/>
            <person name="Pujic P."/>
            <person name="Purnelle B."/>
            <person name="Rapoport G."/>
            <person name="Rey M."/>
            <person name="Reynolds S."/>
            <person name="Rieger M."/>
            <person name="Rivolta C."/>
            <person name="Rocha E."/>
            <person name="Roche B."/>
            <person name="Rose M."/>
            <person name="Sadaie Y."/>
            <person name="Sato T."/>
            <person name="Scanlan E."/>
            <person name="Schleich S."/>
            <person name="Schroeter R."/>
            <person name="Scoffone F."/>
            <person name="Sekiguchi J."/>
            <person name="Sekowska A."/>
            <person name="Seror S.J."/>
            <person name="Serror P."/>
            <person name="Shin B.-S."/>
            <person name="Soldo B."/>
            <person name="Sorokin A."/>
            <person name="Tacconi E."/>
            <person name="Takagi T."/>
            <person name="Takahashi H."/>
            <person name="Takemaru K."/>
            <person name="Takeuchi M."/>
            <person name="Tamakoshi A."/>
            <person name="Tanaka T."/>
            <person name="Terpstra P."/>
            <person name="Tognoni A."/>
            <person name="Tosato V."/>
            <person name="Uchiyama S."/>
            <person name="Vandenbol M."/>
            <person name="Vannier F."/>
            <person name="Vassarotti A."/>
            <person name="Viari A."/>
            <person name="Wambutt R."/>
            <person name="Wedler E."/>
            <person name="Wedler H."/>
            <person name="Weitzenegger T."/>
            <person name="Winters P."/>
            <person name="Wipat A."/>
            <person name="Yamamoto H."/>
            <person name="Yamane K."/>
            <person name="Yasumoto K."/>
            <person name="Yata K."/>
            <person name="Yoshida K."/>
            <person name="Yoshikawa H.-F."/>
            <person name="Zumstein E."/>
            <person name="Yoshikawa H."/>
            <person name="Danchin A."/>
        </authorList>
    </citation>
    <scope>NUCLEOTIDE SEQUENCE [LARGE SCALE GENOMIC DNA]</scope>
    <source>
        <strain>168</strain>
    </source>
</reference>
<name>YJZI_BACSU</name>
<protein>
    <recommendedName>
        <fullName>Uncharacterized protein YjzI</fullName>
    </recommendedName>
</protein>
<gene>
    <name type="primary">yjzI</name>
    <name type="ordered locus">BSU12229</name>
</gene>
<proteinExistence type="predicted"/>
<dbReference type="EMBL" id="AL009126">
    <property type="protein sequence ID" value="CAX52600.1"/>
    <property type="molecule type" value="Genomic_DNA"/>
</dbReference>
<dbReference type="RefSeq" id="WP_003232781.1">
    <property type="nucleotide sequence ID" value="NZ_OZ025638.1"/>
</dbReference>
<dbReference type="RefSeq" id="YP_003097710.1">
    <property type="nucleotide sequence ID" value="NC_000964.3"/>
</dbReference>
<dbReference type="FunCoup" id="C0H3Z3">
    <property type="interactions" value="1"/>
</dbReference>
<dbReference type="PaxDb" id="224308-BSU12229"/>
<dbReference type="EnsemblBacteria" id="CAX52600">
    <property type="protein sequence ID" value="CAX52600"/>
    <property type="gene ID" value="BSU_12229"/>
</dbReference>
<dbReference type="GeneID" id="8302936"/>
<dbReference type="KEGG" id="bsu:BSU12229"/>
<dbReference type="PATRIC" id="fig|224308.179.peg.1321"/>
<dbReference type="eggNOG" id="ENOG502ZJEU">
    <property type="taxonomic scope" value="Bacteria"/>
</dbReference>
<dbReference type="InParanoid" id="C0H3Z3"/>
<dbReference type="OrthoDB" id="2679802at2"/>
<dbReference type="BioCyc" id="BSUB:BSU12229-MONOMER"/>
<dbReference type="Proteomes" id="UP000001570">
    <property type="component" value="Chromosome"/>
</dbReference>
<feature type="chain" id="PRO_0000386662" description="Uncharacterized protein YjzI">
    <location>
        <begin position="1"/>
        <end position="62"/>
    </location>
</feature>
<organism>
    <name type="scientific">Bacillus subtilis (strain 168)</name>
    <dbReference type="NCBI Taxonomy" id="224308"/>
    <lineage>
        <taxon>Bacteria</taxon>
        <taxon>Bacillati</taxon>
        <taxon>Bacillota</taxon>
        <taxon>Bacilli</taxon>
        <taxon>Bacillales</taxon>
        <taxon>Bacillaceae</taxon>
        <taxon>Bacillus</taxon>
    </lineage>
</organism>
<keyword id="KW-1185">Reference proteome</keyword>